<protein>
    <recommendedName>
        <fullName evidence="4">Methylsterol monooxygenase erg25B</fullName>
        <ecNumber evidence="8">1.14.18.-</ecNumber>
    </recommendedName>
    <alternativeName>
        <fullName evidence="4">C-4 methylsterol oxidase erg25B</fullName>
    </alternativeName>
    <alternativeName>
        <fullName evidence="4">Ergosterol biosynthesis protein 25B</fullName>
    </alternativeName>
    <alternativeName>
        <fullName evidence="4">Sterol-C4-methyl oxidase erg25B</fullName>
        <shortName evidence="4">SMO</shortName>
    </alternativeName>
</protein>
<proteinExistence type="evidence at transcript level"/>
<feature type="chain" id="PRO_0000454128" description="Methylsterol monooxygenase erg25B">
    <location>
        <begin position="1"/>
        <end position="296"/>
    </location>
</feature>
<feature type="transmembrane region" description="Helical" evidence="2">
    <location>
        <begin position="50"/>
        <end position="70"/>
    </location>
</feature>
<feature type="transmembrane region" description="Helical" evidence="2">
    <location>
        <begin position="98"/>
        <end position="118"/>
    </location>
</feature>
<feature type="transmembrane region" description="Helical" evidence="2">
    <location>
        <begin position="125"/>
        <end position="145"/>
    </location>
</feature>
<feature type="transmembrane region" description="Helical" evidence="2">
    <location>
        <begin position="201"/>
        <end position="221"/>
    </location>
</feature>
<feature type="domain" description="Fatty acid hydroxylase" evidence="2">
    <location>
        <begin position="140"/>
        <end position="276"/>
    </location>
</feature>
<feature type="short sequence motif" description="Histidine box-1" evidence="8">
    <location>
        <begin position="154"/>
        <end position="158"/>
    </location>
</feature>
<feature type="short sequence motif" description="Histidine box-2" evidence="8">
    <location>
        <begin position="167"/>
        <end position="171"/>
    </location>
</feature>
<feature type="short sequence motif" description="Histidine box-3" evidence="8">
    <location>
        <begin position="251"/>
        <end position="257"/>
    </location>
</feature>
<organism>
    <name type="scientific">Aspergillus fumigatus (strain ATCC MYA-4609 / CBS 101355 / FGSC A1100 / Af293)</name>
    <name type="common">Neosartorya fumigata</name>
    <dbReference type="NCBI Taxonomy" id="330879"/>
    <lineage>
        <taxon>Eukaryota</taxon>
        <taxon>Fungi</taxon>
        <taxon>Dikarya</taxon>
        <taxon>Ascomycota</taxon>
        <taxon>Pezizomycotina</taxon>
        <taxon>Eurotiomycetes</taxon>
        <taxon>Eurotiomycetidae</taxon>
        <taxon>Eurotiales</taxon>
        <taxon>Aspergillaceae</taxon>
        <taxon>Aspergillus</taxon>
        <taxon>Aspergillus subgen. Fumigati</taxon>
    </lineage>
</organism>
<gene>
    <name evidence="4" type="primary">erg25B</name>
    <name type="ORF">AFUA_4G04820</name>
</gene>
<name>ER25B_ASPFU</name>
<comment type="function">
    <text evidence="3 6 7">Sterol-C4-methyl oxidase; part of the third module of ergosterol biosynthesis pathway that includes the late steps of the pathway (PubMed:25107308). Erg25B is a catalytic component of the C-4 demethylation complex that catalyzes the conversion of 4,4-dimethylfecosterol into fecosterol via 4-methylfecosterol (PubMed:25107308). The third module or late pathway involves the ergosterol synthesis itself through consecutive reactions that mainly occur in the endoplasmic reticulum (ER) membrane. Firstly, the squalene synthase erg9 catalyzes the condensation of 2 farnesyl pyrophosphate moieties to form squalene, which is the precursor of all steroids. Squalene synthase is crucial for balancing the incorporation of farnesyl diphosphate (FPP) into sterol and nonsterol isoprene synthesis. Secondly, squalene is converted into lanosterol by the consecutive action of the squalene epoxidase erg1 and the lanosterol synthase erg7. Then, the delta(24)-sterol C-methyltransferase erg6 methylates lanosterol at C-24 to produce eburicol. Eburicol is the substrate of the sterol 14-alpha demethylase encoded by cyp51A and cyp51B, to yield 4,4,24-trimethyl ergosta-8,14,24(28)-trienol. The C-14 reductase erg24 then reduces the C14=C15 double bond which leads to 4,4-dimethylfecosterol. A sequence of further demethylations at C-4, involving the C-4 demethylation complex containing the C-4 methylsterol oxidases erg25A or erg25B, the sterol-4-alpha-carboxylate 3-dehydrogenase erg26 and the 3-keto-steroid reductase erg27, leads to the production of fecosterol via 4-methylfecosterol. The C-8 sterol isomerase erg2 then catalyzes the reaction which results in unsaturation at C-7 in the B ring of sterols and thus converts fecosterol to episterol. The sterol-C5-desaturase erg3B then catalyzes the introduction of a C-5 double bond in the B ring to produce 5-dehydroepisterol. The 2 other sterol-C5-desaturases, erg3A and erg3C, seem to be less important in ergosterol biosynthesis. The C-22 sterol desaturase erg5 further converts 5-dehydroepisterol into ergosta-5,7,22,24(28)-tetraen-3beta-ol by forming the C-22(23) double bond in the sterol side chain. Finally, ergosta-5,7,22,24(28)-tetraen-3beta-ol is substrate of the C-24(28) sterol reductases erg4A and erg4B to produce ergosterol. Possible alternative sterol biosynthetic pathways might exist from fecosterol to ergosterol, depending on the activities of the erg3 isoforms (Probable) (PubMed:16110826, PubMed:18191972).</text>
</comment>
<comment type="cofactor">
    <cofactor evidence="1">
        <name>Fe cation</name>
        <dbReference type="ChEBI" id="CHEBI:24875"/>
    </cofactor>
</comment>
<comment type="pathway">
    <text evidence="3">Steroid metabolism; ergosterol biosynthesis.</text>
</comment>
<comment type="subcellular location">
    <subcellularLocation>
        <location evidence="5">Endoplasmic reticulum membrane</location>
        <topology evidence="2">Multi-pass membrane protein</topology>
    </subcellularLocation>
</comment>
<comment type="induction">
    <text evidence="3">Expression is controlled by the transcriptional regulator srbA.</text>
</comment>
<comment type="domain">
    <text evidence="8">The histidine box domains may contain the active site and/or be involved in metal ion binding.</text>
</comment>
<comment type="disruption phenotype">
    <text evidence="3">Leads to the accumulation of 4-methyl fecosterol and 4,4-dimethyl fecosterol.</text>
</comment>
<comment type="miscellaneous">
    <text evidence="7">In Aspergillus, the biosynthesis pathway of the sterol precursors leading to the prevalent sterol ergosterol differs from yeast. The ring system of lanosterol in S.cerevisiae is firstly demethylised in three enzymatic steps leading to the intermediate zymosterol and secondly a methyl group is added to zymosterol by the sterol 24-C-methyltransferase to form fecosterol. In Aspergillus, lanosterol is firstly transmethylated by the sterol 24-C-methyltransferase leading to the intermediate eburicol and secondly demethylated in three steps to form fecosterol.</text>
</comment>
<comment type="similarity">
    <text evidence="5">Belongs to the sterol desaturase family.</text>
</comment>
<reference key="1">
    <citation type="journal article" date="2005" name="Nature">
        <title>Genomic sequence of the pathogenic and allergenic filamentous fungus Aspergillus fumigatus.</title>
        <authorList>
            <person name="Nierman W.C."/>
            <person name="Pain A."/>
            <person name="Anderson M.J."/>
            <person name="Wortman J.R."/>
            <person name="Kim H.S."/>
            <person name="Arroyo J."/>
            <person name="Berriman M."/>
            <person name="Abe K."/>
            <person name="Archer D.B."/>
            <person name="Bermejo C."/>
            <person name="Bennett J.W."/>
            <person name="Bowyer P."/>
            <person name="Chen D."/>
            <person name="Collins M."/>
            <person name="Coulsen R."/>
            <person name="Davies R."/>
            <person name="Dyer P.S."/>
            <person name="Farman M.L."/>
            <person name="Fedorova N."/>
            <person name="Fedorova N.D."/>
            <person name="Feldblyum T.V."/>
            <person name="Fischer R."/>
            <person name="Fosker N."/>
            <person name="Fraser A."/>
            <person name="Garcia J.L."/>
            <person name="Garcia M.J."/>
            <person name="Goble A."/>
            <person name="Goldman G.H."/>
            <person name="Gomi K."/>
            <person name="Griffith-Jones S."/>
            <person name="Gwilliam R."/>
            <person name="Haas B.J."/>
            <person name="Haas H."/>
            <person name="Harris D.E."/>
            <person name="Horiuchi H."/>
            <person name="Huang J."/>
            <person name="Humphray S."/>
            <person name="Jimenez J."/>
            <person name="Keller N."/>
            <person name="Khouri H."/>
            <person name="Kitamoto K."/>
            <person name="Kobayashi T."/>
            <person name="Konzack S."/>
            <person name="Kulkarni R."/>
            <person name="Kumagai T."/>
            <person name="Lafton A."/>
            <person name="Latge J.-P."/>
            <person name="Li W."/>
            <person name="Lord A."/>
            <person name="Lu C."/>
            <person name="Majoros W.H."/>
            <person name="May G.S."/>
            <person name="Miller B.L."/>
            <person name="Mohamoud Y."/>
            <person name="Molina M."/>
            <person name="Monod M."/>
            <person name="Mouyna I."/>
            <person name="Mulligan S."/>
            <person name="Murphy L.D."/>
            <person name="O'Neil S."/>
            <person name="Paulsen I."/>
            <person name="Penalva M.A."/>
            <person name="Pertea M."/>
            <person name="Price C."/>
            <person name="Pritchard B.L."/>
            <person name="Quail M.A."/>
            <person name="Rabbinowitsch E."/>
            <person name="Rawlins N."/>
            <person name="Rajandream M.A."/>
            <person name="Reichard U."/>
            <person name="Renauld H."/>
            <person name="Robson G.D."/>
            <person name="Rodriguez de Cordoba S."/>
            <person name="Rodriguez-Pena J.M."/>
            <person name="Ronning C.M."/>
            <person name="Rutter S."/>
            <person name="Salzberg S.L."/>
            <person name="Sanchez M."/>
            <person name="Sanchez-Ferrero J.C."/>
            <person name="Saunders D."/>
            <person name="Seeger K."/>
            <person name="Squares R."/>
            <person name="Squares S."/>
            <person name="Takeuchi M."/>
            <person name="Tekaia F."/>
            <person name="Turner G."/>
            <person name="Vazquez de Aldana C.R."/>
            <person name="Weidman J."/>
            <person name="White O."/>
            <person name="Woodward J.R."/>
            <person name="Yu J.-H."/>
            <person name="Fraser C.M."/>
            <person name="Galagan J.E."/>
            <person name="Asai K."/>
            <person name="Machida M."/>
            <person name="Hall N."/>
            <person name="Barrell B.G."/>
            <person name="Denning D.W."/>
        </authorList>
    </citation>
    <scope>NUCLEOTIDE SEQUENCE [LARGE SCALE GENOMIC DNA]</scope>
    <source>
        <strain>ATCC MYA-4609 / CBS 101355 / FGSC A1100 / Af293</strain>
    </source>
</reference>
<reference key="2">
    <citation type="journal article" date="2005" name="Med. Mycol.">
        <title>The ergosterol biosynthesis pathway, transporter genes, and azole resistance in Aspergillus fumigatus.</title>
        <authorList>
            <person name="Ferreira M.E."/>
            <person name="Colombo A.L."/>
            <person name="Paulsen I."/>
            <person name="Ren Q."/>
            <person name="Wortman J."/>
            <person name="Huang J."/>
            <person name="Goldman M.H."/>
            <person name="Goldman G.H."/>
        </authorList>
    </citation>
    <scope>IDENTIFICATION</scope>
    <scope>FUNCTION</scope>
    <scope>PATHWAY</scope>
</reference>
<reference key="3">
    <citation type="journal article" date="2008" name="Steroids">
        <title>Ergosterol biosynthesis pathway in Aspergillus fumigatus.</title>
        <authorList>
            <person name="Alcazar-Fuoli L."/>
            <person name="Mellado E."/>
            <person name="Garcia-Effron G."/>
            <person name="Lopez J.F."/>
            <person name="Grimalt J.O."/>
            <person name="Cuenca-Estrella J.M."/>
            <person name="Rodriguez-Tudela J.L."/>
        </authorList>
    </citation>
    <scope>FUNCTION</scope>
    <scope>PATHWAY</scope>
</reference>
<reference key="4">
    <citation type="journal article" date="2014" name="Microbiology">
        <title>Two C4-sterol methyl oxidases (Erg25) catalyse ergosterol intermediate demethylation and impact environmental stress adaptation in Aspergillus fumigatus.</title>
        <authorList>
            <person name="Blosser S.J."/>
            <person name="Merriman B."/>
            <person name="Grahl N."/>
            <person name="Chung D."/>
            <person name="Cramer R.A."/>
        </authorList>
    </citation>
    <scope>FUNCTION</scope>
    <scope>DOMAIN</scope>
    <scope>DISRUPTION PHENOTYPE</scope>
    <scope>INDUCTION</scope>
    <scope>PATHWAY</scope>
</reference>
<evidence type="ECO:0000250" key="1">
    <source>
        <dbReference type="UniProtKB" id="P53045"/>
    </source>
</evidence>
<evidence type="ECO:0000255" key="2"/>
<evidence type="ECO:0000269" key="3">
    <source>
    </source>
</evidence>
<evidence type="ECO:0000303" key="4">
    <source>
    </source>
</evidence>
<evidence type="ECO:0000305" key="5"/>
<evidence type="ECO:0000305" key="6">
    <source>
    </source>
</evidence>
<evidence type="ECO:0000305" key="7">
    <source>
    </source>
</evidence>
<evidence type="ECO:0000305" key="8">
    <source>
    </source>
</evidence>
<accession>Q4W9I3</accession>
<keyword id="KW-0256">Endoplasmic reticulum</keyword>
<keyword id="KW-0444">Lipid biosynthesis</keyword>
<keyword id="KW-0443">Lipid metabolism</keyword>
<keyword id="KW-0472">Membrane</keyword>
<keyword id="KW-0560">Oxidoreductase</keyword>
<keyword id="KW-1185">Reference proteome</keyword>
<keyword id="KW-0752">Steroid biosynthesis</keyword>
<keyword id="KW-0753">Steroid metabolism</keyword>
<keyword id="KW-0756">Sterol biosynthesis</keyword>
<keyword id="KW-1207">Sterol metabolism</keyword>
<keyword id="KW-0812">Transmembrane</keyword>
<keyword id="KW-1133">Transmembrane helix</keyword>
<dbReference type="EC" id="1.14.18.-" evidence="8"/>
<dbReference type="EMBL" id="AAHF01000016">
    <property type="protein sequence ID" value="EAL84630.1"/>
    <property type="molecule type" value="Genomic_DNA"/>
</dbReference>
<dbReference type="RefSeq" id="XP_746668.1">
    <property type="nucleotide sequence ID" value="XM_741575.1"/>
</dbReference>
<dbReference type="FunCoup" id="Q4W9I3">
    <property type="interactions" value="268"/>
</dbReference>
<dbReference type="STRING" id="330879.Q4W9I3"/>
<dbReference type="EnsemblFungi" id="EAL84630">
    <property type="protein sequence ID" value="EAL84630"/>
    <property type="gene ID" value="AFUA_4G04820"/>
</dbReference>
<dbReference type="GeneID" id="3503949"/>
<dbReference type="KEGG" id="afm:AFUA_4G04820"/>
<dbReference type="VEuPathDB" id="FungiDB:Afu4g04820"/>
<dbReference type="eggNOG" id="KOG0873">
    <property type="taxonomic scope" value="Eukaryota"/>
</dbReference>
<dbReference type="HOGENOM" id="CLU_047036_5_0_1"/>
<dbReference type="InParanoid" id="Q4W9I3"/>
<dbReference type="OMA" id="IVHEFIY"/>
<dbReference type="OrthoDB" id="1658724at2759"/>
<dbReference type="UniPathway" id="UPA00768"/>
<dbReference type="Proteomes" id="UP000002530">
    <property type="component" value="Chromosome 4"/>
</dbReference>
<dbReference type="GO" id="GO:0005789">
    <property type="term" value="C:endoplasmic reticulum membrane"/>
    <property type="evidence" value="ECO:0000318"/>
    <property type="project" value="GO_Central"/>
</dbReference>
<dbReference type="GO" id="GO:0000254">
    <property type="term" value="F:C-4 methylsterol oxidase activity"/>
    <property type="evidence" value="ECO:0000318"/>
    <property type="project" value="GO_Central"/>
</dbReference>
<dbReference type="GO" id="GO:0005506">
    <property type="term" value="F:iron ion binding"/>
    <property type="evidence" value="ECO:0007669"/>
    <property type="project" value="InterPro"/>
</dbReference>
<dbReference type="GO" id="GO:0006696">
    <property type="term" value="P:ergosterol biosynthetic process"/>
    <property type="evidence" value="ECO:0000318"/>
    <property type="project" value="GO_Central"/>
</dbReference>
<dbReference type="InterPro" id="IPR006694">
    <property type="entry name" value="Fatty_acid_hydroxylase"/>
</dbReference>
<dbReference type="InterPro" id="IPR050307">
    <property type="entry name" value="Sterol_Desaturase_Related"/>
</dbReference>
<dbReference type="PANTHER" id="PTHR11863">
    <property type="entry name" value="STEROL DESATURASE"/>
    <property type="match status" value="1"/>
</dbReference>
<dbReference type="Pfam" id="PF04116">
    <property type="entry name" value="FA_hydroxylase"/>
    <property type="match status" value="1"/>
</dbReference>
<sequence length="296" mass="34910">MNSTLYSTSPGTYWEQYEEVSQHSAHLNVVERLWSAWYAWMQNDVLATGIMSFVMHEIVYFGRSVPWILIDTLGLFKNYKIQNNKIPSLREQWDCAKFVLLSHFTVELPQIWLFHPMAQFFGLSTSVPFPSVWTMMYQIAIFFVLEDTWHYFSHRALHWGPLYKAIHKIHHQYSAPFGMAAEYASPIEVMILGFGTVGCPILWCALTGDLHIFTMYVWIVLRLFQAIDAHSGYEFPWSLHHFLPFWAGADHHDLHHEKFVGNYSSSFRWWDYLLDTEYTPEALKRRREGKLTKKAQ</sequence>